<evidence type="ECO:0000250" key="1"/>
<evidence type="ECO:0000255" key="2">
    <source>
        <dbReference type="PROSITE-ProRule" id="PRU00108"/>
    </source>
</evidence>
<evidence type="ECO:0000256" key="3">
    <source>
        <dbReference type="SAM" id="MobiDB-lite"/>
    </source>
</evidence>
<evidence type="ECO:0000305" key="4"/>
<name>TF2LX_MACFA</name>
<accession>Q8MID8</accession>
<protein>
    <recommendedName>
        <fullName>Homeobox protein TGIF2LX</fullName>
    </recommendedName>
    <alternativeName>
        <fullName>TGF-beta-induced transcription factor 2-like protein</fullName>
    </alternativeName>
    <alternativeName>
        <fullName>TGFB-induced factor 2-like protein, X-linked</fullName>
    </alternativeName>
    <alternativeName>
        <fullName>TGIF-like on the X</fullName>
    </alternativeName>
</protein>
<keyword id="KW-0238">DNA-binding</keyword>
<keyword id="KW-0371">Homeobox</keyword>
<keyword id="KW-0539">Nucleus</keyword>
<keyword id="KW-1185">Reference proteome</keyword>
<keyword id="KW-0804">Transcription</keyword>
<keyword id="KW-0805">Transcription regulation</keyword>
<proteinExistence type="evidence at transcript level"/>
<reference key="1">
    <citation type="submission" date="2001-09" db="EMBL/GenBank/DDBJ databases">
        <title>Characterisation of a TGIF-like protein gene in the human Xq21.3-Yp11.2 homology block.</title>
        <authorList>
            <person name="Blanco-Arias P."/>
        </authorList>
    </citation>
    <scope>NUCLEOTIDE SEQUENCE [MRNA]</scope>
</reference>
<dbReference type="EMBL" id="AJ345079">
    <property type="protein sequence ID" value="CAC87901.1"/>
    <property type="molecule type" value="mRNA"/>
</dbReference>
<dbReference type="RefSeq" id="NP_001306538.1">
    <property type="nucleotide sequence ID" value="NM_001319609.1"/>
</dbReference>
<dbReference type="SMR" id="Q8MID8"/>
<dbReference type="STRING" id="9541.ENSMFAP00000006822"/>
<dbReference type="eggNOG" id="KOG0773">
    <property type="taxonomic scope" value="Eukaryota"/>
</dbReference>
<dbReference type="Proteomes" id="UP000233100">
    <property type="component" value="Unplaced"/>
</dbReference>
<dbReference type="GO" id="GO:0005634">
    <property type="term" value="C:nucleus"/>
    <property type="evidence" value="ECO:0007669"/>
    <property type="project" value="UniProtKB-SubCell"/>
</dbReference>
<dbReference type="GO" id="GO:0003677">
    <property type="term" value="F:DNA binding"/>
    <property type="evidence" value="ECO:0007669"/>
    <property type="project" value="UniProtKB-KW"/>
</dbReference>
<dbReference type="GO" id="GO:0006355">
    <property type="term" value="P:regulation of DNA-templated transcription"/>
    <property type="evidence" value="ECO:0007669"/>
    <property type="project" value="InterPro"/>
</dbReference>
<dbReference type="CDD" id="cd00086">
    <property type="entry name" value="homeodomain"/>
    <property type="match status" value="1"/>
</dbReference>
<dbReference type="FunFam" id="1.10.10.60:FF:000059">
    <property type="entry name" value="TGFB-induced factor homeobox 1"/>
    <property type="match status" value="1"/>
</dbReference>
<dbReference type="Gene3D" id="1.10.10.60">
    <property type="entry name" value="Homeodomain-like"/>
    <property type="match status" value="1"/>
</dbReference>
<dbReference type="InterPro" id="IPR001356">
    <property type="entry name" value="HD"/>
</dbReference>
<dbReference type="InterPro" id="IPR009057">
    <property type="entry name" value="Homeodomain-like_sf"/>
</dbReference>
<dbReference type="InterPro" id="IPR008422">
    <property type="entry name" value="KN_HD"/>
</dbReference>
<dbReference type="InterPro" id="IPR050224">
    <property type="entry name" value="TALE_homeobox"/>
</dbReference>
<dbReference type="PANTHER" id="PTHR11850">
    <property type="entry name" value="HOMEOBOX PROTEIN TRANSCRIPTION FACTORS"/>
    <property type="match status" value="1"/>
</dbReference>
<dbReference type="Pfam" id="PF05920">
    <property type="entry name" value="Homeobox_KN"/>
    <property type="match status" value="1"/>
</dbReference>
<dbReference type="SMART" id="SM00389">
    <property type="entry name" value="HOX"/>
    <property type="match status" value="1"/>
</dbReference>
<dbReference type="SUPFAM" id="SSF46689">
    <property type="entry name" value="Homeodomain-like"/>
    <property type="match status" value="1"/>
</dbReference>
<dbReference type="PROSITE" id="PS50071">
    <property type="entry name" value="HOMEOBOX_2"/>
    <property type="match status" value="1"/>
</dbReference>
<comment type="function">
    <text evidence="1">May have a transcription role in testis.</text>
</comment>
<comment type="subcellular location">
    <subcellularLocation>
        <location evidence="2">Nucleus</location>
    </subcellularLocation>
</comment>
<comment type="similarity">
    <text evidence="4">Belongs to the TALE/TGIF homeobox family.</text>
</comment>
<gene>
    <name type="primary">TGIF2LX</name>
    <name type="synonym">TGIFLX</name>
</gene>
<sequence>MEAAADGPAETRSRVEKDSRRAKKDSPAKTQSPAQDTSIMLRNNADTGKVPALPEHKKKRKGYLPAESVKILRDWMYKHRFRAYPSEAEKRMLSKKTNLSLSQISNWFINARRRILPDMLQRRGNDPIVGHKTGKDAHATHLRSTDASVPAKSGPRGSDNVQSLPLRSSPKGQMSGEKIPEPGSAPSQKLTVIAQPKKKVKVSNITSLSSPERVSTEEYADFSSFQLLVDAAVQRAAELELEKKQESNP</sequence>
<organism>
    <name type="scientific">Macaca fascicularis</name>
    <name type="common">Crab-eating macaque</name>
    <name type="synonym">Cynomolgus monkey</name>
    <dbReference type="NCBI Taxonomy" id="9541"/>
    <lineage>
        <taxon>Eukaryota</taxon>
        <taxon>Metazoa</taxon>
        <taxon>Chordata</taxon>
        <taxon>Craniata</taxon>
        <taxon>Vertebrata</taxon>
        <taxon>Euteleostomi</taxon>
        <taxon>Mammalia</taxon>
        <taxon>Eutheria</taxon>
        <taxon>Euarchontoglires</taxon>
        <taxon>Primates</taxon>
        <taxon>Haplorrhini</taxon>
        <taxon>Catarrhini</taxon>
        <taxon>Cercopithecidae</taxon>
        <taxon>Cercopithecinae</taxon>
        <taxon>Macaca</taxon>
    </lineage>
</organism>
<feature type="chain" id="PRO_0000049326" description="Homeobox protein TGIF2LX">
    <location>
        <begin position="1"/>
        <end position="249"/>
    </location>
</feature>
<feature type="DNA-binding region" description="Homeobox; TALE-type" evidence="2">
    <location>
        <begin position="55"/>
        <end position="118"/>
    </location>
</feature>
<feature type="region of interest" description="Disordered" evidence="3">
    <location>
        <begin position="1"/>
        <end position="62"/>
    </location>
</feature>
<feature type="region of interest" description="Disordered" evidence="3">
    <location>
        <begin position="126"/>
        <end position="192"/>
    </location>
</feature>
<feature type="compositionally biased region" description="Basic and acidic residues" evidence="3">
    <location>
        <begin position="9"/>
        <end position="27"/>
    </location>
</feature>
<feature type="compositionally biased region" description="Polar residues" evidence="3">
    <location>
        <begin position="28"/>
        <end position="46"/>
    </location>
</feature>
<feature type="compositionally biased region" description="Polar residues" evidence="3">
    <location>
        <begin position="159"/>
        <end position="172"/>
    </location>
</feature>